<comment type="function">
    <text evidence="1 2">Nonselective cation channel probably playing a role in the regulation of membrane trafficking events (PubMed:29019979). Acts as a Ca(2+)-permeable cation channel with inwardly rectifying activity (By similarity). Mediates release of Ca(2+) from endosomes to the cytoplasm, contributes to endosomal acidification and is involved in the regulation of membrane trafficking and fusion in the endosomal pathway (By similarity). Also permeable to Mg(2+), Na(+) and K(+) (By similarity). Does not seem to act as mechanosensory transduction channel in inner ear sensory hair cells. Proposed to play a critical role at the cochlear stereocilia ankle-link region during hair-bundle growth. Involved in the regulation of autophagy. Through association with GABARAPL2 may be involved in autophagosome formation possibly providing Ca(2+) for the fusion process (By similarity). Through a possible and probably tissue-specific heteromerization with MCOLN1 may be at least in part involved in many lysosome-dependent cellular events. Possible heteromeric ion channel assemblies with TRPV5 show pharmacological similarity with TRPML3 (By similarity).</text>
</comment>
<comment type="catalytic activity">
    <reaction evidence="5">
        <text>Ca(2+)(in) = Ca(2+)(out)</text>
        <dbReference type="Rhea" id="RHEA:29671"/>
        <dbReference type="ChEBI" id="CHEBI:29108"/>
    </reaction>
</comment>
<comment type="catalytic activity">
    <reaction evidence="1">
        <text>Mg(2+)(in) = Mg(2+)(out)</text>
        <dbReference type="Rhea" id="RHEA:29827"/>
        <dbReference type="ChEBI" id="CHEBI:18420"/>
    </reaction>
</comment>
<comment type="catalytic activity">
    <reaction evidence="1">
        <text>K(+)(in) = K(+)(out)</text>
        <dbReference type="Rhea" id="RHEA:29463"/>
        <dbReference type="ChEBI" id="CHEBI:29103"/>
    </reaction>
</comment>
<comment type="catalytic activity">
    <reaction evidence="1">
        <text>Na(+)(in) = Na(+)(out)</text>
        <dbReference type="Rhea" id="RHEA:34963"/>
        <dbReference type="ChEBI" id="CHEBI:29101"/>
    </reaction>
</comment>
<comment type="activity regulation">
    <text evidence="2 5">Channel activity is activated by PtdIns(3,5)P2 (phosphatidylinositol 3,5-bisphosphate) (PubMed:29019979). Inhibited by lumenal H(+) and Na(+). The channel pore shows dynamic behavior and undergoes spontaneous, Ca(2+)-dependent modulation when conducting Ca(2+).</text>
</comment>
<comment type="subunit">
    <text evidence="1 2 5">Homotetramer (PubMed:29019979). Can heterooligomerize with MCOLN1; heteromeric assemblies have different channel properties as compared to the respective homooligomers and may be tissue-specific. May heterooligomerize with TRPV5 to form a functional distinct ion channel (By similarity). Interacts with GABARAPL2 (By similarity).</text>
</comment>
<comment type="interaction">
    <interactant intactId="EBI-26372251">
        <id>F6RG56</id>
    </interactant>
    <interactant intactId="EBI-26372251">
        <id>F6RG56</id>
        <label>MCOLN3</label>
    </interactant>
    <organismsDiffer>false</organismsDiffer>
    <experiments>9</experiments>
</comment>
<comment type="subcellular location">
    <subcellularLocation>
        <location evidence="5">Lysosome membrane</location>
        <topology evidence="5">Multi-pass membrane protein</topology>
    </subcellularLocation>
    <subcellularLocation>
        <location evidence="2">Early endosome membrane</location>
        <topology evidence="5">Multi-pass membrane protein</topology>
    </subcellularLocation>
    <subcellularLocation>
        <location evidence="1">Late endosome membrane</location>
        <topology evidence="5">Multi-pass membrane protein</topology>
    </subcellularLocation>
    <subcellularLocation>
        <location evidence="1">Cytoplasmic vesicle</location>
        <location evidence="1">Autophagosome membrane</location>
        <topology evidence="5">Multi-pass membrane protein</topology>
    </subcellularLocation>
    <subcellularLocation>
        <location evidence="1">Cell projection</location>
        <location evidence="1">Stereocilium membrane</location>
        <topology evidence="5">Multi-pass membrane protein</topology>
    </subcellularLocation>
    <text evidence="1 2">Recycles between the plasma membrane and intracellular compartments by a dynamin-dependent endocytic pathway (By similarity). In the cochlea located at the base of stereocilia near the position of the ankle links (By similarity).</text>
</comment>
<comment type="domain">
    <text evidence="3">The most N-terminal extracellular/lumenal domain (referred to as I-II linker or polycystin-mucolipin domain) contributes to a structure with a four-fold rotational symmetry in a tetrameric assembly; the structure contains a central highly electronegative pore with a 14 A diameter. The pore is critical for Ca(2+) and pH regulation. The protruding structure formed by the I-II linkers may contain all the interaction sites with lipids and proteins in the endolysosomal lumen.</text>
</comment>
<comment type="PTM">
    <text evidence="2">N-glycosylated.</text>
</comment>
<comment type="similarity">
    <text evidence="6">Belongs to the transient receptor (TC 1.A.4) family. Polycystin subfamily. MCOLN3 sub-subfamily.</text>
</comment>
<accession>F6RG56</accession>
<feature type="chain" id="PRO_0000442777" description="Mucolipin-3">
    <location>
        <begin position="1"/>
        <end position="553"/>
    </location>
</feature>
<feature type="topological domain" description="Cytoplasmic" evidence="5">
    <location>
        <begin position="1"/>
        <end position="62"/>
    </location>
</feature>
<feature type="transmembrane region" description="Helical" evidence="5">
    <location>
        <begin position="63"/>
        <end position="83"/>
    </location>
</feature>
<feature type="topological domain" description="Extracellular" evidence="5">
    <location>
        <begin position="84"/>
        <end position="283"/>
    </location>
</feature>
<feature type="transmembrane region" description="Helical" evidence="5">
    <location>
        <begin position="284"/>
        <end position="304"/>
    </location>
</feature>
<feature type="topological domain" description="Cytoplasmic" evidence="5">
    <location>
        <begin position="305"/>
        <end position="341"/>
    </location>
</feature>
<feature type="transmembrane region" description="Helical" evidence="5">
    <location>
        <begin position="342"/>
        <end position="362"/>
    </location>
</feature>
<feature type="topological domain" description="Extracellular" evidence="5">
    <location>
        <begin position="363"/>
        <end position="371"/>
    </location>
</feature>
<feature type="transmembrane region" description="Helical" evidence="5">
    <location>
        <begin position="372"/>
        <end position="392"/>
    </location>
</feature>
<feature type="topological domain" description="Cytoplasmic" evidence="5">
    <location>
        <begin position="393"/>
        <end position="414"/>
    </location>
</feature>
<feature type="transmembrane region" description="Helical" evidence="5">
    <location>
        <begin position="415"/>
        <end position="435"/>
    </location>
</feature>
<feature type="topological domain" description="Extracellular" evidence="5">
    <location>
        <begin position="436"/>
        <end position="443"/>
    </location>
</feature>
<feature type="intramembrane region" description="Pore-forming" evidence="5">
    <location>
        <begin position="444"/>
        <end position="464"/>
    </location>
</feature>
<feature type="topological domain" description="Extracellular" evidence="5">
    <location>
        <begin position="465"/>
        <end position="475"/>
    </location>
</feature>
<feature type="transmembrane region" description="Helical" evidence="5">
    <location>
        <begin position="476"/>
        <end position="497"/>
    </location>
</feature>
<feature type="topological domain" description="Cytoplasmic" evidence="5">
    <location>
        <begin position="498"/>
        <end position="553"/>
    </location>
</feature>
<feature type="region of interest" description="Interaction with phosphoinositides" evidence="5">
    <location>
        <begin position="52"/>
        <end position="62"/>
    </location>
</feature>
<feature type="region of interest" description="Extracellular/lumenal pore loop" evidence="3">
    <location>
        <begin position="104"/>
        <end position="118"/>
    </location>
</feature>
<feature type="short sequence motif" description="Selectivity filter" evidence="5">
    <location>
        <begin position="456"/>
        <end position="459"/>
    </location>
</feature>
<feature type="site" description="Interaction with phosphoinositides" evidence="5">
    <location>
        <position position="305"/>
    </location>
</feature>
<feature type="glycosylation site" description="N-linked (GlcNAc...) asparagine" evidence="4">
    <location>
        <position position="138"/>
    </location>
</feature>
<feature type="glycosylation site" description="N-linked (GlcNAc...) asparagine" evidence="4">
    <location>
        <position position="205"/>
    </location>
</feature>
<feature type="disulfide bond" evidence="3">
    <location>
        <begin position="159"/>
        <end position="185"/>
    </location>
</feature>
<feature type="disulfide bond" evidence="3">
    <location>
        <begin position="238"/>
        <end position="269"/>
    </location>
</feature>
<feature type="mutagenesis site" description="Loss of phosphatidylinositol 3,5-bisphosphate binding; when associated with A-58 and A-62." evidence="5">
    <original>K</original>
    <variation>A</variation>
    <location>
        <position position="52"/>
    </location>
</feature>
<feature type="mutagenesis site" description="Abolishes channel activation by phosphatidylinositol 3,5-bisphosphate. Loss of phosphatidylinositol 3,5-bisphosphate binding; when associated with A-52 and A-62." evidence="5">
    <original>R</original>
    <variation>A</variation>
    <location>
        <position position="58"/>
    </location>
</feature>
<feature type="mutagenesis site" description="Loss of phosphatidylinositol 3,5-bisphosphate binding; when associated with A-52 and A-58." evidence="5">
    <original>K</original>
    <variation>A</variation>
    <location>
        <position position="62"/>
    </location>
</feature>
<feature type="mutagenesis site" description="Loss of a predicted N-glycosylation site. No effect on function." evidence="5">
    <original>N</original>
    <variation>Q</variation>
    <location>
        <position position="138"/>
    </location>
</feature>
<feature type="mutagenesis site" description="Abolishes channel activation by phosphatidylinositol 3,5-bisphosphate." evidence="5">
    <original>R</original>
    <variation>A</variation>
    <location>
        <position position="305"/>
    </location>
</feature>
<feature type="mutagenesis site" description="Constitutively active channel." evidence="5">
    <original>A</original>
    <variation>P</variation>
    <location>
        <position position="419"/>
    </location>
</feature>
<feature type="mutagenesis site" description="Decreases channel activation by phosphatidylinositol 3,5-bisphosphate." evidence="5">
    <original>F</original>
    <variation>A</variation>
    <location>
        <position position="524"/>
    </location>
</feature>
<feature type="helix" evidence="9">
    <location>
        <begin position="34"/>
        <end position="46"/>
    </location>
</feature>
<feature type="helix" evidence="9">
    <location>
        <begin position="51"/>
        <end position="54"/>
    </location>
</feature>
<feature type="helix" evidence="9">
    <location>
        <begin position="61"/>
        <end position="102"/>
    </location>
</feature>
<feature type="helix" evidence="9">
    <location>
        <begin position="119"/>
        <end position="134"/>
    </location>
</feature>
<feature type="helix" evidence="9">
    <location>
        <begin position="136"/>
        <end position="139"/>
    </location>
</feature>
<feature type="strand" evidence="9">
    <location>
        <begin position="156"/>
        <end position="169"/>
    </location>
</feature>
<feature type="helix" evidence="9">
    <location>
        <begin position="170"/>
        <end position="172"/>
    </location>
</feature>
<feature type="strand" evidence="9">
    <location>
        <begin position="174"/>
        <end position="188"/>
    </location>
</feature>
<feature type="strand" evidence="9">
    <location>
        <begin position="210"/>
        <end position="212"/>
    </location>
</feature>
<feature type="strand" evidence="9">
    <location>
        <begin position="215"/>
        <end position="225"/>
    </location>
</feature>
<feature type="strand" evidence="9">
    <location>
        <begin position="227"/>
        <end position="229"/>
    </location>
</feature>
<feature type="strand" evidence="9">
    <location>
        <begin position="238"/>
        <end position="248"/>
    </location>
</feature>
<feature type="strand" evidence="9">
    <location>
        <begin position="256"/>
        <end position="267"/>
    </location>
</feature>
<feature type="strand" evidence="9">
    <location>
        <begin position="272"/>
        <end position="274"/>
    </location>
</feature>
<feature type="strand" evidence="9">
    <location>
        <begin position="277"/>
        <end position="279"/>
    </location>
</feature>
<feature type="helix" evidence="9">
    <location>
        <begin position="285"/>
        <end position="325"/>
    </location>
</feature>
<feature type="helix" evidence="9">
    <location>
        <begin position="332"/>
        <end position="337"/>
    </location>
</feature>
<feature type="helix" evidence="9">
    <location>
        <begin position="340"/>
        <end position="365"/>
    </location>
</feature>
<feature type="helix" evidence="9">
    <location>
        <begin position="372"/>
        <end position="390"/>
    </location>
</feature>
<feature type="turn" evidence="9">
    <location>
        <begin position="391"/>
        <end position="394"/>
    </location>
</feature>
<feature type="helix" evidence="9">
    <location>
        <begin position="396"/>
        <end position="434"/>
    </location>
</feature>
<feature type="strand" evidence="9">
    <location>
        <begin position="438"/>
        <end position="440"/>
    </location>
</feature>
<feature type="helix" evidence="9">
    <location>
        <begin position="444"/>
        <end position="455"/>
    </location>
</feature>
<feature type="helix" evidence="9">
    <location>
        <begin position="461"/>
        <end position="465"/>
    </location>
</feature>
<feature type="helix" evidence="9">
    <location>
        <begin position="472"/>
        <end position="491"/>
    </location>
</feature>
<feature type="helix" evidence="9">
    <location>
        <begin position="494"/>
        <end position="514"/>
    </location>
</feature>
<feature type="helix" evidence="9">
    <location>
        <begin position="522"/>
        <end position="525"/>
    </location>
</feature>
<reference evidence="7" key="1">
    <citation type="journal article" date="2014" name="Gigascience">
        <title>De novo assembly of the common marmoset transcriptome from NextGen mRNA sequences.</title>
        <authorList>
            <person name="Maudhoo M.D."/>
            <person name="Ren D."/>
            <person name="Gradnigo J.S."/>
            <person name="Gibbs R.M."/>
            <person name="Lubker A.C."/>
            <person name="Moriyama E.N."/>
            <person name="French J.A."/>
            <person name="Norgren R.B. Jr."/>
        </authorList>
    </citation>
    <scope>NUCLEOTIDE SEQUENCE [LARGE SCALE MRNA]</scope>
    <source>
        <tissue evidence="7">Hippocampus</tissue>
    </source>
</reference>
<reference evidence="8" key="2">
    <citation type="submission" date="2009-03" db="EMBL/GenBank/DDBJ databases">
        <authorList>
            <person name="Warren W."/>
            <person name="Ye L."/>
            <person name="Minx P."/>
            <person name="Worley K."/>
            <person name="Gibbs R."/>
            <person name="Wilson R.K."/>
        </authorList>
    </citation>
    <scope>NUCLEOTIDE SEQUENCE [LARGE SCALE GENOMIC DNA]</scope>
</reference>
<reference key="3">
    <citation type="journal article" date="2017" name="Nature">
        <title>Cryo-electron microscopy structure of the lysosomal calcium-permeable channel TRPML3.</title>
        <authorList>
            <person name="Hirschi M."/>
            <person name="Herzik M.A. Jr."/>
            <person name="Wie J."/>
            <person name="Suo Y."/>
            <person name="Borschel W.F."/>
            <person name="Ren D."/>
            <person name="Lander G.C."/>
            <person name="Lee S.Y."/>
        </authorList>
    </citation>
    <scope>STRUCTURE BY ELECTRON MICROSCOPY (2.94 ANGSTROMS) OF MUTANT GLN-138</scope>
    <scope>FUNCTION</scope>
    <scope>ACTIVITY REGULATION</scope>
    <scope>TOPOLOGY</scope>
    <scope>SUBUNIT</scope>
    <scope>MUTAGENESIS OF LYS-52; ARG-58; LYS-62; ASN-138; ARG-305; ALA-419 AND PHE-524</scope>
</reference>
<gene>
    <name evidence="7" type="primary">MCOLN3</name>
</gene>
<dbReference type="EMBL" id="GAMS01004359">
    <property type="protein sequence ID" value="JAB18777.1"/>
    <property type="molecule type" value="mRNA"/>
</dbReference>
<dbReference type="EMBL" id="ACFV01092212">
    <property type="status" value="NOT_ANNOTATED_CDS"/>
    <property type="molecule type" value="Genomic_DNA"/>
</dbReference>
<dbReference type="EMBL" id="ACFV01092213">
    <property type="status" value="NOT_ANNOTATED_CDS"/>
    <property type="molecule type" value="Genomic_DNA"/>
</dbReference>
<dbReference type="RefSeq" id="XP_002751067.1">
    <property type="nucleotide sequence ID" value="XM_002751021.6"/>
</dbReference>
<dbReference type="RefSeq" id="XP_008999856.1">
    <property type="nucleotide sequence ID" value="XM_009001608.4"/>
</dbReference>
<dbReference type="RefSeq" id="XP_035107920.1">
    <property type="nucleotide sequence ID" value="XM_035252029.2"/>
</dbReference>
<dbReference type="RefSeq" id="XP_035107921.1">
    <property type="nucleotide sequence ID" value="XM_035252030.2"/>
</dbReference>
<dbReference type="PDB" id="5W3S">
    <property type="method" value="EM"/>
    <property type="resolution" value="2.94 A"/>
    <property type="chains" value="A/B/C/D=1-553"/>
</dbReference>
<dbReference type="PDBsum" id="5W3S"/>
<dbReference type="EMDB" id="EMD-8764"/>
<dbReference type="SMR" id="F6RG56"/>
<dbReference type="FunCoup" id="F6RG56">
    <property type="interactions" value="463"/>
</dbReference>
<dbReference type="STRING" id="9483.ENSCJAP00000012762"/>
<dbReference type="GlyCosmos" id="F6RG56">
    <property type="glycosylation" value="2 sites, No reported glycans"/>
</dbReference>
<dbReference type="Ensembl" id="ENSCJAT00000013447.4">
    <property type="protein sequence ID" value="ENSCJAP00000012762.2"/>
    <property type="gene ID" value="ENSCJAG00000007003.4"/>
</dbReference>
<dbReference type="GeneID" id="100412379"/>
<dbReference type="KEGG" id="cjc:100412379"/>
<dbReference type="CTD" id="55283"/>
<dbReference type="eggNOG" id="KOG3733">
    <property type="taxonomic scope" value="Eukaryota"/>
</dbReference>
<dbReference type="GeneTree" id="ENSGT01030000234635"/>
<dbReference type="HOGENOM" id="CLU_020945_1_1_1"/>
<dbReference type="InParanoid" id="F6RG56"/>
<dbReference type="OrthoDB" id="263481at2759"/>
<dbReference type="TreeFam" id="TF317783"/>
<dbReference type="Proteomes" id="UP000008225">
    <property type="component" value="Chromosome 7"/>
</dbReference>
<dbReference type="Bgee" id="ENSCJAG00000006859">
    <property type="expression patterns" value="Expressed in testis and 3 other cell types or tissues"/>
</dbReference>
<dbReference type="GO" id="GO:0000421">
    <property type="term" value="C:autophagosome membrane"/>
    <property type="evidence" value="ECO:0007669"/>
    <property type="project" value="UniProtKB-SubCell"/>
</dbReference>
<dbReference type="GO" id="GO:0031901">
    <property type="term" value="C:early endosome membrane"/>
    <property type="evidence" value="ECO:0007669"/>
    <property type="project" value="UniProtKB-SubCell"/>
</dbReference>
<dbReference type="GO" id="GO:0031902">
    <property type="term" value="C:late endosome membrane"/>
    <property type="evidence" value="ECO:0007669"/>
    <property type="project" value="UniProtKB-SubCell"/>
</dbReference>
<dbReference type="GO" id="GO:0005765">
    <property type="term" value="C:lysosomal membrane"/>
    <property type="evidence" value="ECO:0000314"/>
    <property type="project" value="UniProtKB"/>
</dbReference>
<dbReference type="GO" id="GO:0016020">
    <property type="term" value="C:membrane"/>
    <property type="evidence" value="ECO:0000314"/>
    <property type="project" value="UniProtKB"/>
</dbReference>
<dbReference type="GO" id="GO:0060171">
    <property type="term" value="C:stereocilium membrane"/>
    <property type="evidence" value="ECO:0007669"/>
    <property type="project" value="UniProtKB-SubCell"/>
</dbReference>
<dbReference type="GO" id="GO:0042802">
    <property type="term" value="F:identical protein binding"/>
    <property type="evidence" value="ECO:0000353"/>
    <property type="project" value="IntAct"/>
</dbReference>
<dbReference type="GO" id="GO:0097682">
    <property type="term" value="F:intracellularly phosphatidylinositol-3,5-bisphosphate-gated monatomic cation channel activity"/>
    <property type="evidence" value="ECO:0000314"/>
    <property type="project" value="UniProtKB"/>
</dbReference>
<dbReference type="GO" id="GO:0005253">
    <property type="term" value="F:monoatomic anion channel activity"/>
    <property type="evidence" value="ECO:0000250"/>
    <property type="project" value="UniProtKB"/>
</dbReference>
<dbReference type="GO" id="GO:0072345">
    <property type="term" value="F:NAADP-sensitive calcium-release channel activity"/>
    <property type="evidence" value="ECO:0007669"/>
    <property type="project" value="TreeGrafter"/>
</dbReference>
<dbReference type="GO" id="GO:0080025">
    <property type="term" value="F:phosphatidylinositol-3,5-bisphosphate binding"/>
    <property type="evidence" value="ECO:0000314"/>
    <property type="project" value="UniProtKB"/>
</dbReference>
<dbReference type="GO" id="GO:0005267">
    <property type="term" value="F:potassium channel activity"/>
    <property type="evidence" value="ECO:0000250"/>
    <property type="project" value="UniProtKB"/>
</dbReference>
<dbReference type="GO" id="GO:0005272">
    <property type="term" value="F:sodium channel activity"/>
    <property type="evidence" value="ECO:0000250"/>
    <property type="project" value="UniProtKB"/>
</dbReference>
<dbReference type="GO" id="GO:0098655">
    <property type="term" value="P:monoatomic cation transmembrane transport"/>
    <property type="evidence" value="ECO:0000314"/>
    <property type="project" value="UniProtKB"/>
</dbReference>
<dbReference type="GO" id="GO:0051289">
    <property type="term" value="P:protein homotetramerization"/>
    <property type="evidence" value="ECO:0000314"/>
    <property type="project" value="UniProtKB"/>
</dbReference>
<dbReference type="CDD" id="cd21072">
    <property type="entry name" value="ELD_TRPML3"/>
    <property type="match status" value="1"/>
</dbReference>
<dbReference type="FunFam" id="1.10.287.70:FF:000033">
    <property type="entry name" value="Mucolipin 1"/>
    <property type="match status" value="1"/>
</dbReference>
<dbReference type="Gene3D" id="1.10.287.70">
    <property type="match status" value="1"/>
</dbReference>
<dbReference type="InterPro" id="IPR049134">
    <property type="entry name" value="MCLN_ECD"/>
</dbReference>
<dbReference type="InterPro" id="IPR047317">
    <property type="entry name" value="MCOLN3_ELD"/>
</dbReference>
<dbReference type="InterPro" id="IPR039031">
    <property type="entry name" value="Mucolipin"/>
</dbReference>
<dbReference type="InterPro" id="IPR013122">
    <property type="entry name" value="PKD1_2_channel"/>
</dbReference>
<dbReference type="PANTHER" id="PTHR12127">
    <property type="entry name" value="MUCOLIPIN"/>
    <property type="match status" value="1"/>
</dbReference>
<dbReference type="PANTHER" id="PTHR12127:SF5">
    <property type="entry name" value="MUCOLIPIN-3"/>
    <property type="match status" value="1"/>
</dbReference>
<dbReference type="Pfam" id="PF21381">
    <property type="entry name" value="MCLN_ECD"/>
    <property type="match status" value="1"/>
</dbReference>
<dbReference type="Pfam" id="PF08016">
    <property type="entry name" value="PKD_channel"/>
    <property type="match status" value="1"/>
</dbReference>
<protein>
    <recommendedName>
        <fullName>Mucolipin-3</fullName>
    </recommendedName>
    <alternativeName>
        <fullName>Transient receptor potential channel mucolipin 3</fullName>
        <shortName>TRPML3</shortName>
    </alternativeName>
</protein>
<proteinExistence type="evidence at protein level"/>
<evidence type="ECO:0000250" key="1">
    <source>
        <dbReference type="UniProtKB" id="Q8R4F0"/>
    </source>
</evidence>
<evidence type="ECO:0000250" key="2">
    <source>
        <dbReference type="UniProtKB" id="Q8TDD5"/>
    </source>
</evidence>
<evidence type="ECO:0000250" key="3">
    <source>
        <dbReference type="UniProtKB" id="Q9GZU1"/>
    </source>
</evidence>
<evidence type="ECO:0000255" key="4"/>
<evidence type="ECO:0000269" key="5">
    <source>
    </source>
</evidence>
<evidence type="ECO:0000305" key="6"/>
<evidence type="ECO:0000312" key="7">
    <source>
        <dbReference type="EMBL" id="JAB18777.1"/>
    </source>
</evidence>
<evidence type="ECO:0000312" key="8">
    <source>
        <dbReference type="Proteomes" id="UP000008225"/>
    </source>
</evidence>
<evidence type="ECO:0007829" key="9">
    <source>
        <dbReference type="PDB" id="5W3S"/>
    </source>
</evidence>
<keyword id="KW-0002">3D-structure</keyword>
<keyword id="KW-1003">Cell membrane</keyword>
<keyword id="KW-0966">Cell projection</keyword>
<keyword id="KW-0968">Cytoplasmic vesicle</keyword>
<keyword id="KW-1015">Disulfide bond</keyword>
<keyword id="KW-0967">Endosome</keyword>
<keyword id="KW-0325">Glycoprotein</keyword>
<keyword id="KW-0407">Ion channel</keyword>
<keyword id="KW-0406">Ion transport</keyword>
<keyword id="KW-0446">Lipid-binding</keyword>
<keyword id="KW-0458">Lysosome</keyword>
<keyword id="KW-0472">Membrane</keyword>
<keyword id="KW-1185">Reference proteome</keyword>
<keyword id="KW-0812">Transmembrane</keyword>
<keyword id="KW-1133">Transmembrane helix</keyword>
<keyword id="KW-0813">Transport</keyword>
<organism evidence="8">
    <name type="scientific">Callithrix jacchus</name>
    <name type="common">White-tufted-ear marmoset</name>
    <dbReference type="NCBI Taxonomy" id="9483"/>
    <lineage>
        <taxon>Eukaryota</taxon>
        <taxon>Metazoa</taxon>
        <taxon>Chordata</taxon>
        <taxon>Craniata</taxon>
        <taxon>Vertebrata</taxon>
        <taxon>Euteleostomi</taxon>
        <taxon>Mammalia</taxon>
        <taxon>Eutheria</taxon>
        <taxon>Euarchontoglires</taxon>
        <taxon>Primates</taxon>
        <taxon>Haplorrhini</taxon>
        <taxon>Platyrrhini</taxon>
        <taxon>Cebidae</taxon>
        <taxon>Callitrichinae</taxon>
        <taxon>Callithrix</taxon>
        <taxon>Callithrix</taxon>
    </lineage>
</organism>
<name>MCLN3_CALJA</name>
<sequence>MANPEIVISSCSSHEEENRCNFNQHTSPSEELLLEDQMRRKLKFFFMNPCEKFWARGRKPWKLAIQILKIAMVTIQLVLFGLSNQMVVAFKEENTVAFKHLFLKGYIDRMDDTYAVYTQSDVYDQIIFAVNQYLQLYNVSVGNHAYENKGTDQSAMAICQHFYKRGNIYPGNDTFDIDPEIETDCFFVEPDEPFHIGTPAENKLNLTLDFHRLLTVELQFKLKAINLQTVRHQELPDCYDFTLTITFDNKAHSGRIKISLDNDISIRECKDWHVSGSIQKNTHNMMIFDAFVILTCLVSLILCIRSVISGLQLQQEFVNFFLLHYKKDVSVSDQMEFVNGWYIMIIISDILTIIGSILKMEIQAKSLTSYDVCSILLGTSTMLVWLGVIRYLGFFAKYNLLILTLQAALPNVIRFCCCAAMIYLGYCFCGWIVLGPYHNKFRSLNMVSECLFSLINGDDMFATFAKMQQKSYLVWLFSRIYLYSFISLFIYMILSLFIALITDTYETIKHYQQDGFPETELRTFISECKDLPNSGKFRLEDDPPVSLFCCCKK</sequence>